<accession>P39563</accession>
<accession>D6VPN8</accession>
<name>YAN4_YEAST</name>
<dbReference type="EMBL" id="L28920">
    <property type="protein sequence ID" value="AAC09504.1"/>
    <property type="molecule type" value="Genomic_DNA"/>
</dbReference>
<dbReference type="EMBL" id="AY558458">
    <property type="protein sequence ID" value="AAS56784.1"/>
    <property type="molecule type" value="Genomic_DNA"/>
</dbReference>
<dbReference type="EMBL" id="BK006935">
    <property type="protein sequence ID" value="DAA07008.1"/>
    <property type="molecule type" value="Genomic_DNA"/>
</dbReference>
<dbReference type="PIR" id="S53472">
    <property type="entry name" value="S53472"/>
</dbReference>
<dbReference type="RefSeq" id="NP_009429.1">
    <property type="nucleotide sequence ID" value="NM_001178235.1"/>
</dbReference>
<dbReference type="BioGRID" id="31816">
    <property type="interactions" value="1"/>
</dbReference>
<dbReference type="DIP" id="DIP-5459N"/>
<dbReference type="FunCoup" id="P39563">
    <property type="interactions" value="43"/>
</dbReference>
<dbReference type="IntAct" id="P39563">
    <property type="interactions" value="1"/>
</dbReference>
<dbReference type="STRING" id="4932.YAR064W"/>
<dbReference type="PaxDb" id="4932-YAR064W"/>
<dbReference type="PeptideAtlas" id="P39563"/>
<dbReference type="EnsemblFungi" id="YAR064W_mRNA">
    <property type="protein sequence ID" value="YAR064W"/>
    <property type="gene ID" value="YAR064W"/>
</dbReference>
<dbReference type="GeneID" id="851294"/>
<dbReference type="KEGG" id="sce:YAR064W"/>
<dbReference type="AGR" id="SGD:S000000089"/>
<dbReference type="SGD" id="S000000089">
    <property type="gene designation" value="YAR064W"/>
</dbReference>
<dbReference type="VEuPathDB" id="FungiDB:YAR064W"/>
<dbReference type="HOGENOM" id="CLU_2321683_0_0_1"/>
<dbReference type="InParanoid" id="P39563"/>
<dbReference type="BioCyc" id="YEAST:G3O-28887-MONOMER"/>
<dbReference type="PRO" id="PR:P39563"/>
<dbReference type="Proteomes" id="UP000002311">
    <property type="component" value="Chromosome I"/>
</dbReference>
<dbReference type="RNAct" id="P39563">
    <property type="molecule type" value="protein"/>
</dbReference>
<dbReference type="GO" id="GO:0016020">
    <property type="term" value="C:membrane"/>
    <property type="evidence" value="ECO:0007669"/>
    <property type="project" value="UniProtKB-SubCell"/>
</dbReference>
<keyword id="KW-0472">Membrane</keyword>
<keyword id="KW-1185">Reference proteome</keyword>
<keyword id="KW-0812">Transmembrane</keyword>
<keyword id="KW-1133">Transmembrane helix</keyword>
<gene>
    <name type="ordered locus">YAR064W</name>
</gene>
<proteinExistence type="evidence at protein level"/>
<feature type="chain" id="PRO_0000202433" description="Uncharacterized protein YAR064W">
    <location>
        <begin position="1"/>
        <end position="99"/>
    </location>
</feature>
<feature type="transmembrane region" description="Helical" evidence="1">
    <location>
        <begin position="74"/>
        <end position="90"/>
    </location>
</feature>
<organism>
    <name type="scientific">Saccharomyces cerevisiae (strain ATCC 204508 / S288c)</name>
    <name type="common">Baker's yeast</name>
    <dbReference type="NCBI Taxonomy" id="559292"/>
    <lineage>
        <taxon>Eukaryota</taxon>
        <taxon>Fungi</taxon>
        <taxon>Dikarya</taxon>
        <taxon>Ascomycota</taxon>
        <taxon>Saccharomycotina</taxon>
        <taxon>Saccharomycetes</taxon>
        <taxon>Saccharomycetales</taxon>
        <taxon>Saccharomycetaceae</taxon>
        <taxon>Saccharomyces</taxon>
    </lineage>
</organism>
<evidence type="ECO:0000255" key="1"/>
<evidence type="ECO:0000269" key="2">
    <source>
    </source>
</evidence>
<evidence type="ECO:0000305" key="3"/>
<comment type="subcellular location">
    <subcellularLocation>
        <location evidence="3">Membrane</location>
        <topology evidence="3">Single-pass membrane protein</topology>
    </subcellularLocation>
</comment>
<comment type="miscellaneous">
    <text evidence="2">Present with 1520 molecules/cell in log phase SD medium.</text>
</comment>
<reference key="1">
    <citation type="submission" date="1994-02" db="EMBL/GenBank/DDBJ databases">
        <title>Sequencing of chromosome I of Saccharomyces cerevisiae: analysis of the 52 Kbp CDC15-FLO1-PHO11-YAR074 region.</title>
        <authorList>
            <person name="Bussey H."/>
            <person name="Keng T."/>
            <person name="Storms R.K."/>
            <person name="Vo D."/>
            <person name="Zhong W."/>
            <person name="Fortin N."/>
            <person name="Barton A.B."/>
            <person name="Kaback D.B."/>
            <person name="Clark M.W."/>
        </authorList>
    </citation>
    <scope>NUCLEOTIDE SEQUENCE [GENOMIC DNA]</scope>
    <source>
        <strain>ATCC 204511 / S288c / AB972</strain>
    </source>
</reference>
<reference key="2">
    <citation type="journal article" date="1995" name="Proc. Natl. Acad. Sci. U.S.A.">
        <title>The nucleotide sequence of chromosome I from Saccharomyces cerevisiae.</title>
        <authorList>
            <person name="Bussey H."/>
            <person name="Kaback D.B."/>
            <person name="Zhong W.-W."/>
            <person name="Vo D.H."/>
            <person name="Clark M.W."/>
            <person name="Fortin N."/>
            <person name="Hall J."/>
            <person name="Ouellette B.F.F."/>
            <person name="Keng T."/>
            <person name="Barton A.B."/>
            <person name="Su Y."/>
            <person name="Davies C.J."/>
            <person name="Storms R.K."/>
        </authorList>
    </citation>
    <scope>NUCLEOTIDE SEQUENCE [LARGE SCALE GENOMIC DNA]</scope>
    <source>
        <strain>ATCC 204508 / S288c</strain>
    </source>
</reference>
<reference key="3">
    <citation type="journal article" date="2014" name="G3 (Bethesda)">
        <title>The reference genome sequence of Saccharomyces cerevisiae: Then and now.</title>
        <authorList>
            <person name="Engel S.R."/>
            <person name="Dietrich F.S."/>
            <person name="Fisk D.G."/>
            <person name="Binkley G."/>
            <person name="Balakrishnan R."/>
            <person name="Costanzo M.C."/>
            <person name="Dwight S.S."/>
            <person name="Hitz B.C."/>
            <person name="Karra K."/>
            <person name="Nash R.S."/>
            <person name="Weng S."/>
            <person name="Wong E.D."/>
            <person name="Lloyd P."/>
            <person name="Skrzypek M.S."/>
            <person name="Miyasato S.R."/>
            <person name="Simison M."/>
            <person name="Cherry J.M."/>
        </authorList>
    </citation>
    <scope>GENOME REANNOTATION</scope>
    <source>
        <strain>ATCC 204508 / S288c</strain>
    </source>
</reference>
<reference key="4">
    <citation type="journal article" date="2007" name="Genome Res.">
        <title>Approaching a complete repository of sequence-verified protein-encoding clones for Saccharomyces cerevisiae.</title>
        <authorList>
            <person name="Hu Y."/>
            <person name="Rolfs A."/>
            <person name="Bhullar B."/>
            <person name="Murthy T.V.S."/>
            <person name="Zhu C."/>
            <person name="Berger M.F."/>
            <person name="Camargo A.A."/>
            <person name="Kelley F."/>
            <person name="McCarron S."/>
            <person name="Jepson D."/>
            <person name="Richardson A."/>
            <person name="Raphael J."/>
            <person name="Moreira D."/>
            <person name="Taycher E."/>
            <person name="Zuo D."/>
            <person name="Mohr S."/>
            <person name="Kane M.F."/>
            <person name="Williamson J."/>
            <person name="Simpson A.J.G."/>
            <person name="Bulyk M.L."/>
            <person name="Harlow E."/>
            <person name="Marsischky G."/>
            <person name="Kolodner R.D."/>
            <person name="LaBaer J."/>
        </authorList>
    </citation>
    <scope>NUCLEOTIDE SEQUENCE [GENOMIC DNA]</scope>
    <source>
        <strain>ATCC 204508 / S288c</strain>
    </source>
</reference>
<reference key="5">
    <citation type="journal article" date="2003" name="Nature">
        <title>Global analysis of protein expression in yeast.</title>
        <authorList>
            <person name="Ghaemmaghami S."/>
            <person name="Huh W.-K."/>
            <person name="Bower K."/>
            <person name="Howson R.W."/>
            <person name="Belle A."/>
            <person name="Dephoure N."/>
            <person name="O'Shea E.K."/>
            <person name="Weissman J.S."/>
        </authorList>
    </citation>
    <scope>LEVEL OF PROTEIN EXPRESSION [LARGE SCALE ANALYSIS]</scope>
</reference>
<sequence length="99" mass="11139">MLIDFCCSYIAGTHGRERAPSFTGTFVSHVSGENNCRPRRSEITQPCASGTEKKHFAATEKPCTNSLEGSRKDFLSLPLGHSYLFLFCFWRMICSEPKL</sequence>
<protein>
    <recommendedName>
        <fullName>Uncharacterized protein YAR064W</fullName>
    </recommendedName>
</protein>